<protein>
    <recommendedName>
        <fullName>Angio-associated migratory cell protein</fullName>
    </recommendedName>
</protein>
<accession>Q5RCG7</accession>
<accession>Q5RA18</accession>
<dbReference type="EMBL" id="CR858303">
    <property type="protein sequence ID" value="CAH90540.1"/>
    <property type="molecule type" value="mRNA"/>
</dbReference>
<dbReference type="EMBL" id="CR859206">
    <property type="protein sequence ID" value="CAH91392.1"/>
    <property type="status" value="ALT_INIT"/>
    <property type="molecule type" value="mRNA"/>
</dbReference>
<dbReference type="RefSeq" id="NP_001125288.1">
    <property type="nucleotide sequence ID" value="NM_001131816.1"/>
</dbReference>
<dbReference type="SMR" id="Q5RCG7"/>
<dbReference type="FunCoup" id="Q5RCG7">
    <property type="interactions" value="1652"/>
</dbReference>
<dbReference type="STRING" id="9601.ENSPPYP00000014710"/>
<dbReference type="Ensembl" id="ENSPPYT00000015307.3">
    <property type="protein sequence ID" value="ENSPPYP00000014710.2"/>
    <property type="gene ID" value="ENSPPYG00000013166.3"/>
</dbReference>
<dbReference type="GeneID" id="100172186"/>
<dbReference type="KEGG" id="pon:100172186"/>
<dbReference type="CTD" id="14"/>
<dbReference type="eggNOG" id="KOG0296">
    <property type="taxonomic scope" value="Eukaryota"/>
</dbReference>
<dbReference type="GeneTree" id="ENSGT00940000153648"/>
<dbReference type="HOGENOM" id="CLU_000288_57_9_1"/>
<dbReference type="InParanoid" id="Q5RCG7"/>
<dbReference type="OMA" id="GPDEVMW"/>
<dbReference type="OrthoDB" id="10261640at2759"/>
<dbReference type="TreeFam" id="TF314543"/>
<dbReference type="Proteomes" id="UP000001595">
    <property type="component" value="Chromosome 2B"/>
</dbReference>
<dbReference type="GO" id="GO:0009986">
    <property type="term" value="C:cell surface"/>
    <property type="evidence" value="ECO:0000250"/>
    <property type="project" value="UniProtKB"/>
</dbReference>
<dbReference type="GO" id="GO:0005829">
    <property type="term" value="C:cytosol"/>
    <property type="evidence" value="ECO:0007669"/>
    <property type="project" value="TreeGrafter"/>
</dbReference>
<dbReference type="GO" id="GO:0045171">
    <property type="term" value="C:intercellular bridge"/>
    <property type="evidence" value="ECO:0007669"/>
    <property type="project" value="Ensembl"/>
</dbReference>
<dbReference type="GO" id="GO:0015630">
    <property type="term" value="C:microtubule cytoskeleton"/>
    <property type="evidence" value="ECO:0007669"/>
    <property type="project" value="Ensembl"/>
</dbReference>
<dbReference type="GO" id="GO:0005886">
    <property type="term" value="C:plasma membrane"/>
    <property type="evidence" value="ECO:0007669"/>
    <property type="project" value="UniProtKB-SubCell"/>
</dbReference>
<dbReference type="GO" id="GO:0008201">
    <property type="term" value="F:heparin binding"/>
    <property type="evidence" value="ECO:0007669"/>
    <property type="project" value="Ensembl"/>
</dbReference>
<dbReference type="GO" id="GO:0001525">
    <property type="term" value="P:angiogenesis"/>
    <property type="evidence" value="ECO:0007669"/>
    <property type="project" value="UniProtKB-KW"/>
</dbReference>
<dbReference type="GO" id="GO:0030154">
    <property type="term" value="P:cell differentiation"/>
    <property type="evidence" value="ECO:0007669"/>
    <property type="project" value="UniProtKB-KW"/>
</dbReference>
<dbReference type="GO" id="GO:0010595">
    <property type="term" value="P:positive regulation of endothelial cell migration"/>
    <property type="evidence" value="ECO:0000250"/>
    <property type="project" value="UniProtKB"/>
</dbReference>
<dbReference type="GO" id="GO:0014909">
    <property type="term" value="P:smooth muscle cell migration"/>
    <property type="evidence" value="ECO:0000250"/>
    <property type="project" value="UniProtKB"/>
</dbReference>
<dbReference type="CDD" id="cd00200">
    <property type="entry name" value="WD40"/>
    <property type="match status" value="1"/>
</dbReference>
<dbReference type="FunFam" id="2.130.10.10:FF:000074">
    <property type="entry name" value="Angio-associated migratory cell protein-like protein"/>
    <property type="match status" value="1"/>
</dbReference>
<dbReference type="Gene3D" id="2.130.10.10">
    <property type="entry name" value="YVTN repeat-like/Quinoprotein amine dehydrogenase"/>
    <property type="match status" value="1"/>
</dbReference>
<dbReference type="InterPro" id="IPR015943">
    <property type="entry name" value="WD40/YVTN_repeat-like_dom_sf"/>
</dbReference>
<dbReference type="InterPro" id="IPR019775">
    <property type="entry name" value="WD40_repeat_CS"/>
</dbReference>
<dbReference type="InterPro" id="IPR036322">
    <property type="entry name" value="WD40_repeat_dom_sf"/>
</dbReference>
<dbReference type="InterPro" id="IPR001680">
    <property type="entry name" value="WD40_rpt"/>
</dbReference>
<dbReference type="InterPro" id="IPR051179">
    <property type="entry name" value="WD_repeat_multifunction"/>
</dbReference>
<dbReference type="PANTHER" id="PTHR19857:SF8">
    <property type="entry name" value="ANGIO-ASSOCIATED MIGRATORY CELL PROTEIN"/>
    <property type="match status" value="1"/>
</dbReference>
<dbReference type="PANTHER" id="PTHR19857">
    <property type="entry name" value="MITOCHONDRIAL DIVISION PROTEIN 1-RELATED"/>
    <property type="match status" value="1"/>
</dbReference>
<dbReference type="Pfam" id="PF00400">
    <property type="entry name" value="WD40"/>
    <property type="match status" value="6"/>
</dbReference>
<dbReference type="SMART" id="SM00320">
    <property type="entry name" value="WD40"/>
    <property type="match status" value="8"/>
</dbReference>
<dbReference type="SUPFAM" id="SSF50978">
    <property type="entry name" value="WD40 repeat-like"/>
    <property type="match status" value="1"/>
</dbReference>
<dbReference type="PROSITE" id="PS00678">
    <property type="entry name" value="WD_REPEATS_1"/>
    <property type="match status" value="1"/>
</dbReference>
<dbReference type="PROSITE" id="PS50082">
    <property type="entry name" value="WD_REPEATS_2"/>
    <property type="match status" value="6"/>
</dbReference>
<dbReference type="PROSITE" id="PS50294">
    <property type="entry name" value="WD_REPEATS_REGION"/>
    <property type="match status" value="1"/>
</dbReference>
<gene>
    <name type="primary">AAMP</name>
</gene>
<organism>
    <name type="scientific">Pongo abelii</name>
    <name type="common">Sumatran orangutan</name>
    <name type="synonym">Pongo pygmaeus abelii</name>
    <dbReference type="NCBI Taxonomy" id="9601"/>
    <lineage>
        <taxon>Eukaryota</taxon>
        <taxon>Metazoa</taxon>
        <taxon>Chordata</taxon>
        <taxon>Craniata</taxon>
        <taxon>Vertebrata</taxon>
        <taxon>Euteleostomi</taxon>
        <taxon>Mammalia</taxon>
        <taxon>Eutheria</taxon>
        <taxon>Euarchontoglires</taxon>
        <taxon>Primates</taxon>
        <taxon>Haplorrhini</taxon>
        <taxon>Catarrhini</taxon>
        <taxon>Hominidae</taxon>
        <taxon>Pongo</taxon>
    </lineage>
</organism>
<name>AAMP_PONAB</name>
<comment type="function">
    <text evidence="1">Plays a role in angiogenesis and cell migration. In smooth muscle cell migration, may act through the RhoA pathway (By similarity).</text>
</comment>
<comment type="subcellular location">
    <subcellularLocation>
        <location evidence="1">Cell membrane</location>
    </subcellularLocation>
    <subcellularLocation>
        <location evidence="1">Cytoplasm</location>
    </subcellularLocation>
</comment>
<comment type="sequence caution" evidence="4">
    <conflict type="erroneous initiation">
        <sequence resource="EMBL-CDS" id="CAH91392"/>
    </conflict>
</comment>
<evidence type="ECO:0000250" key="1"/>
<evidence type="ECO:0000250" key="2">
    <source>
        <dbReference type="UniProtKB" id="Q13685"/>
    </source>
</evidence>
<evidence type="ECO:0000256" key="3">
    <source>
        <dbReference type="SAM" id="MobiDB-lite"/>
    </source>
</evidence>
<evidence type="ECO:0000305" key="4"/>
<feature type="chain" id="PRO_0000050833" description="Angio-associated migratory cell protein">
    <location>
        <begin position="1"/>
        <end position="434"/>
    </location>
</feature>
<feature type="repeat" description="WD 1">
    <location>
        <begin position="89"/>
        <end position="129"/>
    </location>
</feature>
<feature type="repeat" description="WD 2">
    <location>
        <begin position="132"/>
        <end position="171"/>
    </location>
</feature>
<feature type="repeat" description="WD 3">
    <location>
        <begin position="173"/>
        <end position="212"/>
    </location>
</feature>
<feature type="repeat" description="WD 4">
    <location>
        <begin position="214"/>
        <end position="254"/>
    </location>
</feature>
<feature type="repeat" description="WD 5">
    <location>
        <begin position="258"/>
        <end position="299"/>
    </location>
</feature>
<feature type="repeat" description="WD 6">
    <location>
        <begin position="315"/>
        <end position="354"/>
    </location>
</feature>
<feature type="repeat" description="WD 7">
    <location>
        <begin position="356"/>
        <end position="395"/>
    </location>
</feature>
<feature type="repeat" description="WD 8">
    <location>
        <begin position="398"/>
        <end position="433"/>
    </location>
</feature>
<feature type="region of interest" description="Disordered" evidence="3">
    <location>
        <begin position="1"/>
        <end position="63"/>
    </location>
</feature>
<feature type="compositionally biased region" description="Acidic residues" evidence="3">
    <location>
        <begin position="39"/>
        <end position="62"/>
    </location>
</feature>
<feature type="modified residue" description="Phosphoserine" evidence="2">
    <location>
        <position position="20"/>
    </location>
</feature>
<feature type="sequence conflict" description="In Ref. 1; CAH90540." evidence="4" ref="1">
    <original>T</original>
    <variation>I</variation>
    <location>
        <position position="86"/>
    </location>
</feature>
<feature type="sequence conflict" description="In Ref. 1; CAH90540." evidence="4" ref="1">
    <original>E</original>
    <variation>G</variation>
    <location>
        <position position="125"/>
    </location>
</feature>
<feature type="sequence conflict" description="In Ref. 1; CAH90540." evidence="4" ref="1">
    <original>TA</original>
    <variation>H</variation>
    <location>
        <begin position="193"/>
        <end position="194"/>
    </location>
</feature>
<keyword id="KW-0037">Angiogenesis</keyword>
<keyword id="KW-1003">Cell membrane</keyword>
<keyword id="KW-0963">Cytoplasm</keyword>
<keyword id="KW-0217">Developmental protein</keyword>
<keyword id="KW-0221">Differentiation</keyword>
<keyword id="KW-0472">Membrane</keyword>
<keyword id="KW-0597">Phosphoprotein</keyword>
<keyword id="KW-1185">Reference proteome</keyword>
<keyword id="KW-0677">Repeat</keyword>
<keyword id="KW-0853">WD repeat</keyword>
<sequence length="434" mass="46781">MESESESGAAADTPPLETLSFHGDEEIIEVVELDPGPPDPDDLAQEMEDVDFEEEEEEEGNEEGWVLEPQEGVVGSMEGPDDSEVTFALHSASVFCVSLDPKTNTLAVTGGEDDKAFVWRLSDGELLFECAGHKDSVTCAGFSHDSTLVATGDMSGLLKVWQVDTKEEVWSFEAGDLEWMEWHPRAPVLLAGTADGNTWMWKVPNGDCKTFQGPNCPATCGRVLPDGKRAVVGYEDGTIRIWDLKQGSPIHVLKGTEGHQGPLTCVATNQDGSLILTGSVDCQAKLVSATTGKVVGVFRPETVASQPSLGEGEESESNSVESLGFCSVMPLAAVGYLDGTLAIYDLATQTLRHQCQHQSGIVQLLWEAGTAVVYTCSLDGIVRLWDARTGRLLTDYRGHTAEILDFALSKDASLVVTTSGDHKAKVFCVQRPDR</sequence>
<reference key="1">
    <citation type="submission" date="2004-11" db="EMBL/GenBank/DDBJ databases">
        <authorList>
            <consortium name="The German cDNA consortium"/>
        </authorList>
    </citation>
    <scope>NUCLEOTIDE SEQUENCE [LARGE SCALE MRNA]</scope>
    <source>
        <tissue>Brain cortex</tissue>
        <tissue>Kidney</tissue>
    </source>
</reference>
<proteinExistence type="evidence at transcript level"/>